<proteinExistence type="evidence at transcript level"/>
<sequence length="756" mass="86687">MATLTDIGVAATINILTAFAFFIAFAILRLQPVNDRVYFPKWYLKGLRSSPIKTGGFASKFVNLDFRSYIRFLNWMPQALRMPEPELIDHAGLDSVVYLRIYLLGLKIFFPIACIAFTVMVPVNWTNSTLDQLKNLTFSDIDKLSISNIPTGSSRFWVHLCMAYVITFWTCFVLQREYKHIASMRLQFLASEHRRPDQFTVLVRNIPPDPDESVSELVEHFFKVNHPDYYLTYQAVYNANKLSELVQKRMKLQNWLDYYQNKHSRNPSKRPLIKIGFLGCWGEEVDAIDHYIEKIEGLTRKISEEKETVMSSTKSLVPAAFVSFKKRWGAVVCSQTQQSRNPTEWLTEWAPEPRDIYWDNLALPYVQLTIRRLVIAVAFFFLTFFFMIPIAFVQTLANIEGIEKAVPFLKPLIEVKTVKSFIQGFLPGIALKIFLIVLPSILMLMSKFEGFISKSSLERRCASRYYMFQFINVFLCSIIAGTALQQLDSFLNQSATEIPKTIGVSIPMKATFFITYIMVDGWAGVAGEILRLKPLIIYHLKNFFLVKTEKDREEAMDPGTIGFNTGEPQIQLYFILGLVYAAVSPILLPFILVFFALAYVVYRHQIINVYNQEYESAAAFWPDVHRRVVIALIVSQLLLMGLLSTKKAARSTPLLFILPVLTIGFHKFCQGRYQPIFVTYPLQDAMVKDTLERMREPNLNLKTFLQNAYAHPVFKAADNLANEMVVEEPAPDKTPDLVATKRGSRRFNSGSAETFT</sequence>
<evidence type="ECO:0000250" key="1">
    <source>
        <dbReference type="UniProtKB" id="Q5XEZ5"/>
    </source>
</evidence>
<evidence type="ECO:0000255" key="2"/>
<evidence type="ECO:0000256" key="3">
    <source>
        <dbReference type="SAM" id="MobiDB-lite"/>
    </source>
</evidence>
<evidence type="ECO:0000303" key="4">
    <source>
    </source>
</evidence>
<evidence type="ECO:0000305" key="5"/>
<reference key="1">
    <citation type="journal article" date="2000" name="DNA Res.">
        <title>Structural analysis of Arabidopsis thaliana chromosome 3. I. Sequence features of the regions of 4,504,864 bp covered by sixty P1 and TAC clones.</title>
        <authorList>
            <person name="Sato S."/>
            <person name="Nakamura Y."/>
            <person name="Kaneko T."/>
            <person name="Katoh T."/>
            <person name="Asamizu E."/>
            <person name="Tabata S."/>
        </authorList>
    </citation>
    <scope>NUCLEOTIDE SEQUENCE [LARGE SCALE GENOMIC DNA]</scope>
    <source>
        <strain>cv. Columbia</strain>
    </source>
</reference>
<reference key="2">
    <citation type="journal article" date="2017" name="Plant J.">
        <title>Araport11: a complete reannotation of the Arabidopsis thaliana reference genome.</title>
        <authorList>
            <person name="Cheng C.Y."/>
            <person name="Krishnakumar V."/>
            <person name="Chan A.P."/>
            <person name="Thibaud-Nissen F."/>
            <person name="Schobel S."/>
            <person name="Town C.D."/>
        </authorList>
    </citation>
    <scope>GENOME REANNOTATION</scope>
    <source>
        <strain>cv. Columbia</strain>
    </source>
</reference>
<reference key="3">
    <citation type="submission" date="2005-03" db="EMBL/GenBank/DDBJ databases">
        <title>Large-scale analysis of RIKEN Arabidopsis full-length (RAFL) cDNAs.</title>
        <authorList>
            <person name="Totoki Y."/>
            <person name="Seki M."/>
            <person name="Ishida J."/>
            <person name="Nakajima M."/>
            <person name="Enju A."/>
            <person name="Kamiya A."/>
            <person name="Narusaka M."/>
            <person name="Shin-i T."/>
            <person name="Nakagawa M."/>
            <person name="Sakamoto N."/>
            <person name="Oishi K."/>
            <person name="Kohara Y."/>
            <person name="Kobayashi M."/>
            <person name="Toyoda A."/>
            <person name="Sakaki Y."/>
            <person name="Sakurai T."/>
            <person name="Iida K."/>
            <person name="Akiyama K."/>
            <person name="Satou M."/>
            <person name="Toyoda T."/>
            <person name="Konagaya A."/>
            <person name="Carninci P."/>
            <person name="Kawai J."/>
            <person name="Hayashizaki Y."/>
            <person name="Shinozaki K."/>
        </authorList>
    </citation>
    <scope>NUCLEOTIDE SEQUENCE [LARGE SCALE MRNA]</scope>
    <source>
        <strain>cv. Columbia</strain>
    </source>
</reference>
<reference key="4">
    <citation type="journal article" date="2014" name="Cell Res.">
        <title>DUF221 proteins are a family of osmosensitive calcium-permeable cation channels conserved across eukaryotes.</title>
        <authorList>
            <person name="Hou C."/>
            <person name="Tian W."/>
            <person name="Kleist T."/>
            <person name="He K."/>
            <person name="Garcia V."/>
            <person name="Bai F."/>
            <person name="Hao Y."/>
            <person name="Luan S."/>
            <person name="Li L."/>
        </authorList>
    </citation>
    <scope>GENE FAMILY</scope>
</reference>
<reference key="5">
    <citation type="journal article" date="2020" name="Nature">
        <title>The calcium-permeable channel OSCA1.3 regulates plant stomatal immunity.</title>
        <authorList>
            <person name="Thor K."/>
            <person name="Jiang S."/>
            <person name="Michard E."/>
            <person name="George J."/>
            <person name="Scherzer S."/>
            <person name="Huang S."/>
            <person name="Dindas J."/>
            <person name="Derbyshire P."/>
            <person name="Leitao N."/>
            <person name="DeFalco T.A."/>
            <person name="Koester P."/>
            <person name="Hunter K."/>
            <person name="Kimura S."/>
            <person name="Gronnier J."/>
            <person name="Stransfeld L."/>
            <person name="Kadota Y."/>
            <person name="Buecherl C.A."/>
            <person name="Charpentier M."/>
            <person name="Wrzaczek M."/>
            <person name="MacLean D."/>
            <person name="Oldroyd G.E.D."/>
            <person name="Menke F.L.H."/>
            <person name="Roelfsema M.R.G."/>
            <person name="Hedrich R."/>
            <person name="Feijo J."/>
            <person name="Zipfel C."/>
        </authorList>
    </citation>
    <scope>GENE FAMILY</scope>
</reference>
<protein>
    <recommendedName>
        <fullName evidence="4">Hyperosmolality-gated Ca2+ permeable channel 1.5</fullName>
        <shortName evidence="4">AtOSCA1.5</shortName>
    </recommendedName>
</protein>
<accession>Q9LVE4</accession>
<accession>Q56ZM5</accession>
<keyword id="KW-0106">Calcium</keyword>
<keyword id="KW-0407">Ion channel</keyword>
<keyword id="KW-0406">Ion transport</keyword>
<keyword id="KW-0472">Membrane</keyword>
<keyword id="KW-1185">Reference proteome</keyword>
<keyword id="KW-0812">Transmembrane</keyword>
<keyword id="KW-1133">Transmembrane helix</keyword>
<keyword id="KW-0813">Transport</keyword>
<dbReference type="EMBL" id="AB019232">
    <property type="protein sequence ID" value="BAB02357.1"/>
    <property type="molecule type" value="Genomic_DNA"/>
</dbReference>
<dbReference type="EMBL" id="CP002686">
    <property type="protein sequence ID" value="AEE76531.1"/>
    <property type="molecule type" value="Genomic_DNA"/>
</dbReference>
<dbReference type="EMBL" id="AK220939">
    <property type="protein sequence ID" value="BAD94445.1"/>
    <property type="molecule type" value="mRNA"/>
</dbReference>
<dbReference type="RefSeq" id="NP_188799.1">
    <property type="nucleotide sequence ID" value="NM_113057.3"/>
</dbReference>
<dbReference type="SMR" id="Q9LVE4"/>
<dbReference type="FunCoup" id="Q9LVE4">
    <property type="interactions" value="545"/>
</dbReference>
<dbReference type="STRING" id="3702.Q9LVE4"/>
<dbReference type="iPTMnet" id="Q9LVE4"/>
<dbReference type="PaxDb" id="3702-AT3G21620.1"/>
<dbReference type="ProteomicsDB" id="224554"/>
<dbReference type="EnsemblPlants" id="AT3G21620.1">
    <property type="protein sequence ID" value="AT3G21620.1"/>
    <property type="gene ID" value="AT3G21620"/>
</dbReference>
<dbReference type="GeneID" id="821716"/>
<dbReference type="Gramene" id="AT3G21620.1">
    <property type="protein sequence ID" value="AT3G21620.1"/>
    <property type="gene ID" value="AT3G21620"/>
</dbReference>
<dbReference type="KEGG" id="ath:AT3G21620"/>
<dbReference type="Araport" id="AT3G21620"/>
<dbReference type="TAIR" id="AT3G21620"/>
<dbReference type="eggNOG" id="KOG1134">
    <property type="taxonomic scope" value="Eukaryota"/>
</dbReference>
<dbReference type="HOGENOM" id="CLU_002458_7_1_1"/>
<dbReference type="InParanoid" id="Q9LVE4"/>
<dbReference type="OMA" id="PKRYYAH"/>
<dbReference type="PhylomeDB" id="Q9LVE4"/>
<dbReference type="PRO" id="PR:Q9LVE4"/>
<dbReference type="Proteomes" id="UP000006548">
    <property type="component" value="Chromosome 3"/>
</dbReference>
<dbReference type="ExpressionAtlas" id="Q9LVE4">
    <property type="expression patterns" value="baseline and differential"/>
</dbReference>
<dbReference type="GO" id="GO:0016020">
    <property type="term" value="C:membrane"/>
    <property type="evidence" value="ECO:0007669"/>
    <property type="project" value="UniProtKB-SubCell"/>
</dbReference>
<dbReference type="GO" id="GO:0005227">
    <property type="term" value="F:calcium-activated cation channel activity"/>
    <property type="evidence" value="ECO:0007669"/>
    <property type="project" value="InterPro"/>
</dbReference>
<dbReference type="InterPro" id="IPR045122">
    <property type="entry name" value="Csc1-like"/>
</dbReference>
<dbReference type="InterPro" id="IPR003864">
    <property type="entry name" value="CSC1/OSCA1-like_7TM"/>
</dbReference>
<dbReference type="InterPro" id="IPR027815">
    <property type="entry name" value="CSC1/OSCA1-like_cyt"/>
</dbReference>
<dbReference type="InterPro" id="IPR032880">
    <property type="entry name" value="Csc1/OSCA1-like_N"/>
</dbReference>
<dbReference type="PANTHER" id="PTHR13018">
    <property type="entry name" value="PROBABLE MEMBRANE PROTEIN DUF221-RELATED"/>
    <property type="match status" value="1"/>
</dbReference>
<dbReference type="PANTHER" id="PTHR13018:SF5">
    <property type="entry name" value="RE44586P"/>
    <property type="match status" value="1"/>
</dbReference>
<dbReference type="Pfam" id="PF14703">
    <property type="entry name" value="PHM7_cyt"/>
    <property type="match status" value="1"/>
</dbReference>
<dbReference type="Pfam" id="PF02714">
    <property type="entry name" value="RSN1_7TM"/>
    <property type="match status" value="1"/>
</dbReference>
<dbReference type="Pfam" id="PF13967">
    <property type="entry name" value="RSN1_TM"/>
    <property type="match status" value="1"/>
</dbReference>
<name>OSC15_ARATH</name>
<gene>
    <name evidence="4" type="primary">OSCA1.5</name>
    <name type="ordered locus">At3g21620</name>
    <name type="ORF">MIL23.19</name>
</gene>
<organism>
    <name type="scientific">Arabidopsis thaliana</name>
    <name type="common">Mouse-ear cress</name>
    <dbReference type="NCBI Taxonomy" id="3702"/>
    <lineage>
        <taxon>Eukaryota</taxon>
        <taxon>Viridiplantae</taxon>
        <taxon>Streptophyta</taxon>
        <taxon>Embryophyta</taxon>
        <taxon>Tracheophyta</taxon>
        <taxon>Spermatophyta</taxon>
        <taxon>Magnoliopsida</taxon>
        <taxon>eudicotyledons</taxon>
        <taxon>Gunneridae</taxon>
        <taxon>Pentapetalae</taxon>
        <taxon>rosids</taxon>
        <taxon>malvids</taxon>
        <taxon>Brassicales</taxon>
        <taxon>Brassicaceae</taxon>
        <taxon>Camelineae</taxon>
        <taxon>Arabidopsis</taxon>
    </lineage>
</organism>
<feature type="chain" id="PRO_0000429802" description="Hyperosmolality-gated Ca2+ permeable channel 1.5">
    <location>
        <begin position="1"/>
        <end position="756"/>
    </location>
</feature>
<feature type="transmembrane region" description="Helical" evidence="2">
    <location>
        <begin position="7"/>
        <end position="27"/>
    </location>
</feature>
<feature type="transmembrane region" description="Helical" evidence="2">
    <location>
        <begin position="101"/>
        <end position="121"/>
    </location>
</feature>
<feature type="transmembrane region" description="Helical" evidence="2">
    <location>
        <begin position="154"/>
        <end position="174"/>
    </location>
</feature>
<feature type="transmembrane region" description="Helical" evidence="2">
    <location>
        <begin position="373"/>
        <end position="393"/>
    </location>
</feature>
<feature type="transmembrane region" description="Helical" evidence="2">
    <location>
        <begin position="425"/>
        <end position="445"/>
    </location>
</feature>
<feature type="transmembrane region" description="Helical" evidence="2">
    <location>
        <begin position="465"/>
        <end position="485"/>
    </location>
</feature>
<feature type="transmembrane region" description="Helical" evidence="2">
    <location>
        <begin position="510"/>
        <end position="530"/>
    </location>
</feature>
<feature type="transmembrane region" description="Helical" evidence="2">
    <location>
        <begin position="574"/>
        <end position="594"/>
    </location>
</feature>
<feature type="transmembrane region" description="Helical" evidence="2">
    <location>
        <begin position="628"/>
        <end position="648"/>
    </location>
</feature>
<feature type="transmembrane region" description="Helical" evidence="2">
    <location>
        <begin position="651"/>
        <end position="671"/>
    </location>
</feature>
<feature type="region of interest" description="Disordered" evidence="3">
    <location>
        <begin position="731"/>
        <end position="756"/>
    </location>
</feature>
<feature type="compositionally biased region" description="Polar residues" evidence="3">
    <location>
        <begin position="746"/>
        <end position="756"/>
    </location>
</feature>
<feature type="sequence conflict" description="In Ref. 3; BAD94445." evidence="5" ref="3">
    <original>A</original>
    <variation>V</variation>
    <location>
        <position position="18"/>
    </location>
</feature>
<comment type="function">
    <text evidence="1">Acts as an osmosensitive calcium-permeable cation channel.</text>
</comment>
<comment type="subcellular location">
    <subcellularLocation>
        <location evidence="5">Membrane</location>
        <topology evidence="5">Multi-pass membrane protein</topology>
    </subcellularLocation>
</comment>
<comment type="similarity">
    <text evidence="5">Belongs to the CSC1 (TC 1.A.17) family.</text>
</comment>